<evidence type="ECO:0000255" key="1">
    <source>
        <dbReference type="PROSITE-ProRule" id="PRU01020"/>
    </source>
</evidence>
<organism>
    <name type="scientific">Methanocaldococcus jannaschii (strain ATCC 43067 / DSM 2661 / JAL-1 / JCM 10045 / NBRC 100440)</name>
    <name type="common">Methanococcus jannaschii</name>
    <dbReference type="NCBI Taxonomy" id="243232"/>
    <lineage>
        <taxon>Archaea</taxon>
        <taxon>Methanobacteriati</taxon>
        <taxon>Methanobacteriota</taxon>
        <taxon>Methanomada group</taxon>
        <taxon>Methanococci</taxon>
        <taxon>Methanococcales</taxon>
        <taxon>Methanocaldococcaceae</taxon>
        <taxon>Methanocaldococcus</taxon>
    </lineage>
</organism>
<proteinExistence type="inferred from homology"/>
<reference key="1">
    <citation type="journal article" date="1996" name="Science">
        <title>Complete genome sequence of the methanogenic archaeon, Methanococcus jannaschii.</title>
        <authorList>
            <person name="Bult C.J."/>
            <person name="White O."/>
            <person name="Olsen G.J."/>
            <person name="Zhou L."/>
            <person name="Fleischmann R.D."/>
            <person name="Sutton G.G."/>
            <person name="Blake J.A."/>
            <person name="FitzGerald L.M."/>
            <person name="Clayton R.A."/>
            <person name="Gocayne J.D."/>
            <person name="Kerlavage A.R."/>
            <person name="Dougherty B.A."/>
            <person name="Tomb J.-F."/>
            <person name="Adams M.D."/>
            <person name="Reich C.I."/>
            <person name="Overbeek R."/>
            <person name="Kirkness E.F."/>
            <person name="Weinstock K.G."/>
            <person name="Merrick J.M."/>
            <person name="Glodek A."/>
            <person name="Scott J.L."/>
            <person name="Geoghagen N.S.M."/>
            <person name="Weidman J.F."/>
            <person name="Fuhrmann J.L."/>
            <person name="Nguyen D."/>
            <person name="Utterback T.R."/>
            <person name="Kelley J.M."/>
            <person name="Peterson J.D."/>
            <person name="Sadow P.W."/>
            <person name="Hanna M.C."/>
            <person name="Cotton M.D."/>
            <person name="Roberts K.M."/>
            <person name="Hurst M.A."/>
            <person name="Kaine B.P."/>
            <person name="Borodovsky M."/>
            <person name="Klenk H.-P."/>
            <person name="Fraser C.M."/>
            <person name="Smith H.O."/>
            <person name="Woese C.R."/>
            <person name="Venter J.C."/>
        </authorList>
    </citation>
    <scope>NUCLEOTIDE SEQUENCE [LARGE SCALE GENOMIC DNA]</scope>
    <source>
        <strain>ATCC 43067 / DSM 2661 / JAL-1 / JCM 10045 / NBRC 100440</strain>
    </source>
</reference>
<keyword id="KW-0489">Methyltransferase</keyword>
<keyword id="KW-1185">Reference proteome</keyword>
<keyword id="KW-0949">S-adenosyl-L-methionine</keyword>
<keyword id="KW-0808">Transferase</keyword>
<gene>
    <name type="ordered locus">MJ0086</name>
</gene>
<sequence>MLLKSPDKSPEKILKLFDEVYSKARIFYLLRTAIDLNLFEYLSSFKTAKELAEILDADLILMEYMLKILNELDLIESKVVSERIYYKNAEITNIYLKKDSNYSIINPIYSYFENIKNWENLADILKNKSNCSNMDVDNFFPKVVRRMADECKCWELQKVLNYMAKYEEFKNAKKLLDLAGGHGLYAIGFSMLNRNLKCYVFDLPNVIEETKKFIKKYNAKNVFTITGDFYKDDIGKGYDIIFCSYNPGGKNPKIAEKVYNALNEGGLFINKQFFPDKEEGIEDYINNMEWNFSKPEGLKKGKIRYTFEGDLNLNDYLKYLEDLGFKILEVVDMSELLGLDENSSSFRKSANPSDSLRFKDNSPAKMIVAKKL</sequence>
<feature type="chain" id="PRO_0000106687" description="Uncharacterized protein MJ0086">
    <location>
        <begin position="1"/>
        <end position="372"/>
    </location>
</feature>
<feature type="binding site" evidence="1">
    <location>
        <position position="202"/>
    </location>
    <ligand>
        <name>S-adenosyl-L-methionine</name>
        <dbReference type="ChEBI" id="CHEBI:59789"/>
    </ligand>
</feature>
<feature type="binding site" evidence="1">
    <location>
        <begin position="227"/>
        <end position="229"/>
    </location>
    <ligand>
        <name>S-adenosyl-L-methionine</name>
        <dbReference type="ChEBI" id="CHEBI:59789"/>
    </ligand>
</feature>
<protein>
    <recommendedName>
        <fullName>Uncharacterized protein MJ0086</fullName>
        <ecNumber>2.1.1.-</ecNumber>
    </recommendedName>
</protein>
<dbReference type="EC" id="2.1.1.-"/>
<dbReference type="EMBL" id="L77117">
    <property type="protein sequence ID" value="AAB98068.1"/>
    <property type="molecule type" value="Genomic_DNA"/>
</dbReference>
<dbReference type="PIR" id="F64310">
    <property type="entry name" value="F64310"/>
</dbReference>
<dbReference type="RefSeq" id="WP_010869578.1">
    <property type="nucleotide sequence ID" value="NC_000909.1"/>
</dbReference>
<dbReference type="SMR" id="Q57551"/>
<dbReference type="FunCoup" id="Q57551">
    <property type="interactions" value="12"/>
</dbReference>
<dbReference type="STRING" id="243232.MJ_0086"/>
<dbReference type="PaxDb" id="243232-MJ_0086"/>
<dbReference type="EnsemblBacteria" id="AAB98068">
    <property type="protein sequence ID" value="AAB98068"/>
    <property type="gene ID" value="MJ_0086"/>
</dbReference>
<dbReference type="GeneID" id="1450925"/>
<dbReference type="KEGG" id="mja:MJ_0086"/>
<dbReference type="eggNOG" id="arCOG03411">
    <property type="taxonomic scope" value="Archaea"/>
</dbReference>
<dbReference type="HOGENOM" id="CLU_005533_4_3_2"/>
<dbReference type="InParanoid" id="Q57551"/>
<dbReference type="OrthoDB" id="146767at2157"/>
<dbReference type="PhylomeDB" id="Q57551"/>
<dbReference type="Proteomes" id="UP000000805">
    <property type="component" value="Chromosome"/>
</dbReference>
<dbReference type="GO" id="GO:0008171">
    <property type="term" value="F:O-methyltransferase activity"/>
    <property type="evidence" value="ECO:0000318"/>
    <property type="project" value="GO_Central"/>
</dbReference>
<dbReference type="GO" id="GO:0046983">
    <property type="term" value="F:protein dimerization activity"/>
    <property type="evidence" value="ECO:0007669"/>
    <property type="project" value="InterPro"/>
</dbReference>
<dbReference type="GO" id="GO:0008757">
    <property type="term" value="F:S-adenosylmethionine-dependent methyltransferase activity"/>
    <property type="evidence" value="ECO:0000318"/>
    <property type="project" value="GO_Central"/>
</dbReference>
<dbReference type="GO" id="GO:0009058">
    <property type="term" value="P:biosynthetic process"/>
    <property type="evidence" value="ECO:0000318"/>
    <property type="project" value="GO_Central"/>
</dbReference>
<dbReference type="GO" id="GO:0032259">
    <property type="term" value="P:methylation"/>
    <property type="evidence" value="ECO:0000318"/>
    <property type="project" value="GO_Central"/>
</dbReference>
<dbReference type="Gene3D" id="3.40.50.150">
    <property type="entry name" value="Vaccinia Virus protein VP39"/>
    <property type="match status" value="1"/>
</dbReference>
<dbReference type="Gene3D" id="1.10.10.10">
    <property type="entry name" value="Winged helix-like DNA-binding domain superfamily/Winged helix DNA-binding domain"/>
    <property type="match status" value="1"/>
</dbReference>
<dbReference type="InterPro" id="IPR016461">
    <property type="entry name" value="COMT-like"/>
</dbReference>
<dbReference type="InterPro" id="IPR001077">
    <property type="entry name" value="O_MeTrfase_dom"/>
</dbReference>
<dbReference type="InterPro" id="IPR012967">
    <property type="entry name" value="Plant_O-MeTrfase_dimerisation"/>
</dbReference>
<dbReference type="InterPro" id="IPR029063">
    <property type="entry name" value="SAM-dependent_MTases_sf"/>
</dbReference>
<dbReference type="InterPro" id="IPR036388">
    <property type="entry name" value="WH-like_DNA-bd_sf"/>
</dbReference>
<dbReference type="InterPro" id="IPR036390">
    <property type="entry name" value="WH_DNA-bd_sf"/>
</dbReference>
<dbReference type="PANTHER" id="PTHR11746">
    <property type="entry name" value="O-METHYLTRANSFERASE"/>
    <property type="match status" value="1"/>
</dbReference>
<dbReference type="Pfam" id="PF08100">
    <property type="entry name" value="Dimerisation"/>
    <property type="match status" value="1"/>
</dbReference>
<dbReference type="Pfam" id="PF00891">
    <property type="entry name" value="Methyltransf_2"/>
    <property type="match status" value="1"/>
</dbReference>
<dbReference type="SUPFAM" id="SSF53335">
    <property type="entry name" value="S-adenosyl-L-methionine-dependent methyltransferases"/>
    <property type="match status" value="1"/>
</dbReference>
<dbReference type="SUPFAM" id="SSF46785">
    <property type="entry name" value="Winged helix' DNA-binding domain"/>
    <property type="match status" value="1"/>
</dbReference>
<dbReference type="PROSITE" id="PS51683">
    <property type="entry name" value="SAM_OMT_II"/>
    <property type="match status" value="1"/>
</dbReference>
<comment type="similarity">
    <text evidence="1">Belongs to the class I-like SAM-binding methyltransferase superfamily. Cation-independent O-methyltransferase family.</text>
</comment>
<accession>Q57551</accession>
<name>Y086_METJA</name>